<feature type="chain" id="PRO_1000187932" description="Ribonuclease Z">
    <location>
        <begin position="1"/>
        <end position="307"/>
    </location>
</feature>
<feature type="active site" description="Proton acceptor" evidence="1">
    <location>
        <position position="67"/>
    </location>
</feature>
<feature type="binding site" evidence="1">
    <location>
        <position position="63"/>
    </location>
    <ligand>
        <name>Zn(2+)</name>
        <dbReference type="ChEBI" id="CHEBI:29105"/>
        <label>1</label>
        <note>catalytic</note>
    </ligand>
</feature>
<feature type="binding site" evidence="1">
    <location>
        <position position="65"/>
    </location>
    <ligand>
        <name>Zn(2+)</name>
        <dbReference type="ChEBI" id="CHEBI:29105"/>
        <label>1</label>
        <note>catalytic</note>
    </ligand>
</feature>
<feature type="binding site" evidence="1">
    <location>
        <position position="67"/>
    </location>
    <ligand>
        <name>Zn(2+)</name>
        <dbReference type="ChEBI" id="CHEBI:29105"/>
        <label>2</label>
        <note>catalytic</note>
    </ligand>
</feature>
<feature type="binding site" evidence="1">
    <location>
        <position position="68"/>
    </location>
    <ligand>
        <name>Zn(2+)</name>
        <dbReference type="ChEBI" id="CHEBI:29105"/>
        <label>2</label>
        <note>catalytic</note>
    </ligand>
</feature>
<feature type="binding site" evidence="1">
    <location>
        <position position="141"/>
    </location>
    <ligand>
        <name>Zn(2+)</name>
        <dbReference type="ChEBI" id="CHEBI:29105"/>
        <label>1</label>
        <note>catalytic</note>
    </ligand>
</feature>
<feature type="binding site" evidence="1">
    <location>
        <position position="212"/>
    </location>
    <ligand>
        <name>Zn(2+)</name>
        <dbReference type="ChEBI" id="CHEBI:29105"/>
        <label>1</label>
        <note>catalytic</note>
    </ligand>
</feature>
<feature type="binding site" evidence="1">
    <location>
        <position position="212"/>
    </location>
    <ligand>
        <name>Zn(2+)</name>
        <dbReference type="ChEBI" id="CHEBI:29105"/>
        <label>2</label>
        <note>catalytic</note>
    </ligand>
</feature>
<feature type="binding site" evidence="1">
    <location>
        <position position="270"/>
    </location>
    <ligand>
        <name>Zn(2+)</name>
        <dbReference type="ChEBI" id="CHEBI:29105"/>
        <label>2</label>
        <note>catalytic</note>
    </ligand>
</feature>
<keyword id="KW-0255">Endonuclease</keyword>
<keyword id="KW-0378">Hydrolase</keyword>
<keyword id="KW-0479">Metal-binding</keyword>
<keyword id="KW-0540">Nuclease</keyword>
<keyword id="KW-0819">tRNA processing</keyword>
<keyword id="KW-0862">Zinc</keyword>
<name>RNZ_BACC3</name>
<comment type="function">
    <text evidence="1">Zinc phosphodiesterase, which displays some tRNA 3'-processing endonuclease activity. Probably involved in tRNA maturation, by removing a 3'-trailer from precursor tRNA.</text>
</comment>
<comment type="catalytic activity">
    <reaction evidence="1">
        <text>Endonucleolytic cleavage of RNA, removing extra 3' nucleotides from tRNA precursor, generating 3' termini of tRNAs. A 3'-hydroxy group is left at the tRNA terminus and a 5'-phosphoryl group is left at the trailer molecule.</text>
        <dbReference type="EC" id="3.1.26.11"/>
    </reaction>
</comment>
<comment type="cofactor">
    <cofactor evidence="1">
        <name>Zn(2+)</name>
        <dbReference type="ChEBI" id="CHEBI:29105"/>
    </cofactor>
    <text evidence="1">Binds 2 Zn(2+) ions.</text>
</comment>
<comment type="subunit">
    <text evidence="1">Homodimer.</text>
</comment>
<comment type="similarity">
    <text evidence="1">Belongs to the RNase Z family.</text>
</comment>
<proteinExistence type="inferred from homology"/>
<dbReference type="EC" id="3.1.26.11" evidence="1"/>
<dbReference type="EMBL" id="CP001407">
    <property type="protein sequence ID" value="ACO27678.1"/>
    <property type="molecule type" value="Genomic_DNA"/>
</dbReference>
<dbReference type="RefSeq" id="WP_000397446.1">
    <property type="nucleotide sequence ID" value="NZ_CP009318.1"/>
</dbReference>
<dbReference type="SMR" id="C1ER14"/>
<dbReference type="KEGG" id="bcx:BCA_4253"/>
<dbReference type="PATRIC" id="fig|572264.18.peg.4204"/>
<dbReference type="Proteomes" id="UP000002210">
    <property type="component" value="Chromosome"/>
</dbReference>
<dbReference type="GO" id="GO:0042781">
    <property type="term" value="F:3'-tRNA processing endoribonuclease activity"/>
    <property type="evidence" value="ECO:0007669"/>
    <property type="project" value="UniProtKB-UniRule"/>
</dbReference>
<dbReference type="GO" id="GO:0008270">
    <property type="term" value="F:zinc ion binding"/>
    <property type="evidence" value="ECO:0007669"/>
    <property type="project" value="UniProtKB-UniRule"/>
</dbReference>
<dbReference type="CDD" id="cd07717">
    <property type="entry name" value="RNaseZ_ZiPD-like_MBL-fold"/>
    <property type="match status" value="1"/>
</dbReference>
<dbReference type="FunFam" id="3.60.15.10:FF:000002">
    <property type="entry name" value="Ribonuclease Z"/>
    <property type="match status" value="1"/>
</dbReference>
<dbReference type="Gene3D" id="3.60.15.10">
    <property type="entry name" value="Ribonuclease Z/Hydroxyacylglutathione hydrolase-like"/>
    <property type="match status" value="1"/>
</dbReference>
<dbReference type="HAMAP" id="MF_01818">
    <property type="entry name" value="RNase_Z_BN"/>
    <property type="match status" value="1"/>
</dbReference>
<dbReference type="InterPro" id="IPR001279">
    <property type="entry name" value="Metallo-B-lactamas"/>
</dbReference>
<dbReference type="InterPro" id="IPR036866">
    <property type="entry name" value="RibonucZ/Hydroxyglut_hydro"/>
</dbReference>
<dbReference type="InterPro" id="IPR013471">
    <property type="entry name" value="RNase_Z/BN"/>
</dbReference>
<dbReference type="NCBIfam" id="NF000800">
    <property type="entry name" value="PRK00055.1-1"/>
    <property type="match status" value="1"/>
</dbReference>
<dbReference type="NCBIfam" id="NF000801">
    <property type="entry name" value="PRK00055.1-3"/>
    <property type="match status" value="1"/>
</dbReference>
<dbReference type="NCBIfam" id="TIGR02651">
    <property type="entry name" value="RNase_Z"/>
    <property type="match status" value="1"/>
</dbReference>
<dbReference type="PANTHER" id="PTHR46018">
    <property type="entry name" value="ZINC PHOSPHODIESTERASE ELAC PROTEIN 1"/>
    <property type="match status" value="1"/>
</dbReference>
<dbReference type="PANTHER" id="PTHR46018:SF2">
    <property type="entry name" value="ZINC PHOSPHODIESTERASE ELAC PROTEIN 1"/>
    <property type="match status" value="1"/>
</dbReference>
<dbReference type="Pfam" id="PF00753">
    <property type="entry name" value="Lactamase_B"/>
    <property type="match status" value="1"/>
</dbReference>
<dbReference type="Pfam" id="PF12706">
    <property type="entry name" value="Lactamase_B_2"/>
    <property type="match status" value="1"/>
</dbReference>
<dbReference type="SMART" id="SM00849">
    <property type="entry name" value="Lactamase_B"/>
    <property type="match status" value="1"/>
</dbReference>
<dbReference type="SUPFAM" id="SSF56281">
    <property type="entry name" value="Metallo-hydrolase/oxidoreductase"/>
    <property type="match status" value="1"/>
</dbReference>
<protein>
    <recommendedName>
        <fullName evidence="1">Ribonuclease Z</fullName>
        <shortName evidence="1">RNase Z</shortName>
        <ecNumber evidence="1">3.1.26.11</ecNumber>
    </recommendedName>
    <alternativeName>
        <fullName evidence="1">tRNA 3 endonuclease</fullName>
    </alternativeName>
    <alternativeName>
        <fullName evidence="1">tRNase Z</fullName>
    </alternativeName>
</protein>
<gene>
    <name evidence="1" type="primary">rnz</name>
    <name type="ordered locus">BCA_4253</name>
</gene>
<organism>
    <name type="scientific">Bacillus cereus (strain 03BB102)</name>
    <dbReference type="NCBI Taxonomy" id="572264"/>
    <lineage>
        <taxon>Bacteria</taxon>
        <taxon>Bacillati</taxon>
        <taxon>Bacillota</taxon>
        <taxon>Bacilli</taxon>
        <taxon>Bacillales</taxon>
        <taxon>Bacillaceae</taxon>
        <taxon>Bacillus</taxon>
        <taxon>Bacillus cereus group</taxon>
    </lineage>
</organism>
<evidence type="ECO:0000255" key="1">
    <source>
        <dbReference type="HAMAP-Rule" id="MF_01818"/>
    </source>
</evidence>
<reference key="1">
    <citation type="submission" date="2009-02" db="EMBL/GenBank/DDBJ databases">
        <title>Genome sequence of Bacillus cereus 03BB102.</title>
        <authorList>
            <person name="Dodson R.J."/>
            <person name="Jackson P."/>
            <person name="Munk A.C."/>
            <person name="Brettin T."/>
            <person name="Bruce D."/>
            <person name="Detter C."/>
            <person name="Tapia R."/>
            <person name="Han C."/>
            <person name="Sutton G."/>
            <person name="Sims D."/>
        </authorList>
    </citation>
    <scope>NUCLEOTIDE SEQUENCE [LARGE SCALE GENOMIC DNA]</scope>
    <source>
        <strain>03BB102</strain>
    </source>
</reference>
<sequence length="307" mass="34199">MEFVFLGTGAGVPSKGRNVSAIALQLLEERGQTWLFDCGEATQHQILHTSVRPRRIEKIFITHLHGDHIFGLPGLLGSRSFQGGTTPLTVYGPKGIKQFIEVALSVSTTHVKYPLEIVEITEEGTVFEDNEFHVETKRLSHGIECFGYRIIEKDIQGALLVDKLLEMGVKPGPLFKRLKDGEVVELENGTILNGNDFIGPPQKGRVITILGDTRYCEASRELAQDADVLVHEATFAAEDEQQAYDYFHSTSKQAASIALQANAKRLILTHISSRYQGDTYKELLKEARELFSNTEIATDLKSFPVDR</sequence>
<accession>C1ER14</accession>